<feature type="chain" id="PRO_1000008943" description="Phosphoadenosine 5'-phosphosulfate reductase">
    <location>
        <begin position="1"/>
        <end position="259"/>
    </location>
</feature>
<feature type="active site" description="Nucleophile; cysteine thiosulfonate intermediate" evidence="1">
    <location>
        <position position="244"/>
    </location>
</feature>
<keyword id="KW-0963">Cytoplasm</keyword>
<keyword id="KW-0560">Oxidoreductase</keyword>
<proteinExistence type="inferred from homology"/>
<protein>
    <recommendedName>
        <fullName evidence="1">Phosphoadenosine 5'-phosphosulfate reductase</fullName>
        <shortName evidence="1">PAPS reductase</shortName>
        <ecNumber evidence="1">1.8.4.8</ecNumber>
    </recommendedName>
    <alternativeName>
        <fullName evidence="1">3'-phosphoadenylylsulfate reductase</fullName>
    </alternativeName>
    <alternativeName>
        <fullName evidence="1">PAPS reductase, thioredoxin dependent</fullName>
    </alternativeName>
    <alternativeName>
        <fullName evidence="1">PAPS sulfotransferase</fullName>
    </alternativeName>
    <alternativeName>
        <fullName evidence="1">PAdoPS reductase</fullName>
    </alternativeName>
</protein>
<dbReference type="EC" id="1.8.4.8" evidence="1"/>
<dbReference type="EMBL" id="CP000789">
    <property type="protein sequence ID" value="ABU69063.1"/>
    <property type="molecule type" value="Genomic_DNA"/>
</dbReference>
<dbReference type="RefSeq" id="WP_005536432.1">
    <property type="nucleotide sequence ID" value="NC_009783.1"/>
</dbReference>
<dbReference type="SMR" id="A7MSZ6"/>
<dbReference type="KEGG" id="vha:VIBHAR_00003"/>
<dbReference type="PATRIC" id="fig|338187.25.peg.2518"/>
<dbReference type="UniPathway" id="UPA00140">
    <property type="reaction ID" value="UER00206"/>
</dbReference>
<dbReference type="Proteomes" id="UP000008152">
    <property type="component" value="Chromosome I"/>
</dbReference>
<dbReference type="GO" id="GO:0005737">
    <property type="term" value="C:cytoplasm"/>
    <property type="evidence" value="ECO:0007669"/>
    <property type="project" value="UniProtKB-SubCell"/>
</dbReference>
<dbReference type="GO" id="GO:0004604">
    <property type="term" value="F:phosphoadenylyl-sulfate reductase (thioredoxin) activity"/>
    <property type="evidence" value="ECO:0007669"/>
    <property type="project" value="UniProtKB-UniRule"/>
</dbReference>
<dbReference type="GO" id="GO:0070814">
    <property type="term" value="P:hydrogen sulfide biosynthetic process"/>
    <property type="evidence" value="ECO:0007669"/>
    <property type="project" value="UniProtKB-UniRule"/>
</dbReference>
<dbReference type="GO" id="GO:0019379">
    <property type="term" value="P:sulfate assimilation, phosphoadenylyl sulfate reduction by phosphoadenylyl-sulfate reductase (thioredoxin)"/>
    <property type="evidence" value="ECO:0007669"/>
    <property type="project" value="UniProtKB-UniRule"/>
</dbReference>
<dbReference type="CDD" id="cd23945">
    <property type="entry name" value="PAPS_reductase"/>
    <property type="match status" value="1"/>
</dbReference>
<dbReference type="FunFam" id="3.40.50.620:FF:000043">
    <property type="entry name" value="Phosphoadenosine phosphosulfate reductase"/>
    <property type="match status" value="1"/>
</dbReference>
<dbReference type="Gene3D" id="3.40.50.620">
    <property type="entry name" value="HUPs"/>
    <property type="match status" value="1"/>
</dbReference>
<dbReference type="HAMAP" id="MF_00063">
    <property type="entry name" value="CysH"/>
    <property type="match status" value="1"/>
</dbReference>
<dbReference type="InterPro" id="IPR004511">
    <property type="entry name" value="PAPS/APS_Rdtase"/>
</dbReference>
<dbReference type="InterPro" id="IPR002500">
    <property type="entry name" value="PAPS_reduct_dom"/>
</dbReference>
<dbReference type="InterPro" id="IPR011800">
    <property type="entry name" value="PAPS_reductase_CysH"/>
</dbReference>
<dbReference type="InterPro" id="IPR014729">
    <property type="entry name" value="Rossmann-like_a/b/a_fold"/>
</dbReference>
<dbReference type="NCBIfam" id="TIGR00434">
    <property type="entry name" value="cysH"/>
    <property type="match status" value="1"/>
</dbReference>
<dbReference type="NCBIfam" id="TIGR02057">
    <property type="entry name" value="PAPS_reductase"/>
    <property type="match status" value="1"/>
</dbReference>
<dbReference type="NCBIfam" id="NF002537">
    <property type="entry name" value="PRK02090.1"/>
    <property type="match status" value="1"/>
</dbReference>
<dbReference type="PANTHER" id="PTHR46509">
    <property type="entry name" value="PHOSPHOADENOSINE PHOSPHOSULFATE REDUCTASE"/>
    <property type="match status" value="1"/>
</dbReference>
<dbReference type="PANTHER" id="PTHR46509:SF1">
    <property type="entry name" value="PHOSPHOADENOSINE PHOSPHOSULFATE REDUCTASE"/>
    <property type="match status" value="1"/>
</dbReference>
<dbReference type="Pfam" id="PF01507">
    <property type="entry name" value="PAPS_reduct"/>
    <property type="match status" value="1"/>
</dbReference>
<dbReference type="PIRSF" id="PIRSF000857">
    <property type="entry name" value="PAPS_reductase"/>
    <property type="match status" value="1"/>
</dbReference>
<dbReference type="SUPFAM" id="SSF52402">
    <property type="entry name" value="Adenine nucleotide alpha hydrolases-like"/>
    <property type="match status" value="1"/>
</dbReference>
<reference key="1">
    <citation type="submission" date="2007-08" db="EMBL/GenBank/DDBJ databases">
        <authorList>
            <consortium name="The Vibrio harveyi Genome Sequencing Project"/>
            <person name="Bassler B."/>
            <person name="Clifton S.W."/>
            <person name="Fulton L."/>
            <person name="Delehaunty K."/>
            <person name="Fronick C."/>
            <person name="Harrison M."/>
            <person name="Markivic C."/>
            <person name="Fulton R."/>
            <person name="Tin-Wollam A.-M."/>
            <person name="Shah N."/>
            <person name="Pepin K."/>
            <person name="Nash W."/>
            <person name="Thiruvilangam P."/>
            <person name="Bhonagiri V."/>
            <person name="Waters C."/>
            <person name="Tu K.C."/>
            <person name="Irgon J."/>
            <person name="Wilson R.K."/>
        </authorList>
    </citation>
    <scope>NUCLEOTIDE SEQUENCE [LARGE SCALE GENOMIC DNA]</scope>
    <source>
        <strain>ATCC BAA-1116 / BB120</strain>
    </source>
</reference>
<comment type="function">
    <text evidence="1">Catalyzes the formation of sulfite from phosphoadenosine 5'-phosphosulfate (PAPS) using thioredoxin as an electron donor.</text>
</comment>
<comment type="catalytic activity">
    <reaction evidence="1">
        <text>[thioredoxin]-disulfide + sulfite + adenosine 3',5'-bisphosphate + 2 H(+) = [thioredoxin]-dithiol + 3'-phosphoadenylyl sulfate</text>
        <dbReference type="Rhea" id="RHEA:11724"/>
        <dbReference type="Rhea" id="RHEA-COMP:10698"/>
        <dbReference type="Rhea" id="RHEA-COMP:10700"/>
        <dbReference type="ChEBI" id="CHEBI:15378"/>
        <dbReference type="ChEBI" id="CHEBI:17359"/>
        <dbReference type="ChEBI" id="CHEBI:29950"/>
        <dbReference type="ChEBI" id="CHEBI:50058"/>
        <dbReference type="ChEBI" id="CHEBI:58339"/>
        <dbReference type="ChEBI" id="CHEBI:58343"/>
        <dbReference type="EC" id="1.8.4.8"/>
    </reaction>
</comment>
<comment type="pathway">
    <text evidence="1">Sulfur metabolism; hydrogen sulfide biosynthesis; sulfite from sulfate: step 3/3.</text>
</comment>
<comment type="subcellular location">
    <subcellularLocation>
        <location evidence="1">Cytoplasm</location>
    </subcellularLocation>
</comment>
<comment type="similarity">
    <text evidence="1">Belongs to the PAPS reductase family. CysH subfamily.</text>
</comment>
<evidence type="ECO:0000255" key="1">
    <source>
        <dbReference type="HAMAP-Rule" id="MF_00063"/>
    </source>
</evidence>
<sequence length="259" mass="29734">MLDSVASKPELAELLTLTKTEQILRLAQINVELEQLSAQERVKWALENLEGEFAVSSSFGIQAAVMLHLVTQQKPDIPIILTDTGYLFAETYQFIDQLKAQLNLNLKVYRAKESANWQEARYGKLWEQGIEGIEKYNKINKVEPMRRALREQNVGTWFSGLRREQSQSRAGLPILSIQNGVFKFLPVIDWTNKDVHYYLEEHGLSYHPLWEQGYLSVGDTHTSRKWEPGMSEEETRFFGLKRECGLHEDDGSEQDGSGI</sequence>
<accession>A7MSZ6</accession>
<name>CYSH_VIBC1</name>
<organism>
    <name type="scientific">Vibrio campbellii (strain ATCC BAA-1116)</name>
    <dbReference type="NCBI Taxonomy" id="2902295"/>
    <lineage>
        <taxon>Bacteria</taxon>
        <taxon>Pseudomonadati</taxon>
        <taxon>Pseudomonadota</taxon>
        <taxon>Gammaproteobacteria</taxon>
        <taxon>Vibrionales</taxon>
        <taxon>Vibrionaceae</taxon>
        <taxon>Vibrio</taxon>
    </lineage>
</organism>
<gene>
    <name evidence="1" type="primary">cysH</name>
    <name type="ordered locus">VIBHAR_00003</name>
</gene>